<gene>
    <name evidence="1" type="primary">aroK</name>
    <name type="ordered locus">RHA1_ro07141</name>
</gene>
<reference key="1">
    <citation type="journal article" date="2006" name="Proc. Natl. Acad. Sci. U.S.A.">
        <title>The complete genome of Rhodococcus sp. RHA1 provides insights into a catabolic powerhouse.</title>
        <authorList>
            <person name="McLeod M.P."/>
            <person name="Warren R.L."/>
            <person name="Hsiao W.W.L."/>
            <person name="Araki N."/>
            <person name="Myhre M."/>
            <person name="Fernandes C."/>
            <person name="Miyazawa D."/>
            <person name="Wong W."/>
            <person name="Lillquist A.L."/>
            <person name="Wang D."/>
            <person name="Dosanjh M."/>
            <person name="Hara H."/>
            <person name="Petrescu A."/>
            <person name="Morin R.D."/>
            <person name="Yang G."/>
            <person name="Stott J.M."/>
            <person name="Schein J.E."/>
            <person name="Shin H."/>
            <person name="Smailus D."/>
            <person name="Siddiqui A.S."/>
            <person name="Marra M.A."/>
            <person name="Jones S.J.M."/>
            <person name="Holt R."/>
            <person name="Brinkman F.S.L."/>
            <person name="Miyauchi K."/>
            <person name="Fukuda M."/>
            <person name="Davies J.E."/>
            <person name="Mohn W.W."/>
            <person name="Eltis L.D."/>
        </authorList>
    </citation>
    <scope>NUCLEOTIDE SEQUENCE [LARGE SCALE GENOMIC DNA]</scope>
    <source>
        <strain>RHA1</strain>
    </source>
</reference>
<proteinExistence type="inferred from homology"/>
<sequence length="168" mass="18320">MAPKAVLVGPPGAGKSTIGRRLAQALDLPLFDTDVAVEEEAGRTIAEIFVQEGEPAFRALEEEIVRKAIESHEGIVSLGGGSILSERTRELLKGHTVIYLEISVAEGLKRTGTNTARPLLAGGDPRQKYTELMRKRRPLYRQVASIRIRTDGRSPARVVQQLVAKLAE</sequence>
<organism>
    <name type="scientific">Rhodococcus jostii (strain RHA1)</name>
    <dbReference type="NCBI Taxonomy" id="101510"/>
    <lineage>
        <taxon>Bacteria</taxon>
        <taxon>Bacillati</taxon>
        <taxon>Actinomycetota</taxon>
        <taxon>Actinomycetes</taxon>
        <taxon>Mycobacteriales</taxon>
        <taxon>Nocardiaceae</taxon>
        <taxon>Rhodococcus</taxon>
    </lineage>
</organism>
<evidence type="ECO:0000255" key="1">
    <source>
        <dbReference type="HAMAP-Rule" id="MF_00109"/>
    </source>
</evidence>
<feature type="chain" id="PRO_1000022991" description="Shikimate kinase">
    <location>
        <begin position="1"/>
        <end position="168"/>
    </location>
</feature>
<feature type="binding site" evidence="1">
    <location>
        <begin position="12"/>
        <end position="17"/>
    </location>
    <ligand>
        <name>ATP</name>
        <dbReference type="ChEBI" id="CHEBI:30616"/>
    </ligand>
</feature>
<feature type="binding site" evidence="1">
    <location>
        <position position="16"/>
    </location>
    <ligand>
        <name>Mg(2+)</name>
        <dbReference type="ChEBI" id="CHEBI:18420"/>
    </ligand>
</feature>
<feature type="binding site" evidence="1">
    <location>
        <position position="34"/>
    </location>
    <ligand>
        <name>substrate</name>
    </ligand>
</feature>
<feature type="binding site" evidence="1">
    <location>
        <position position="58"/>
    </location>
    <ligand>
        <name>substrate</name>
    </ligand>
</feature>
<feature type="binding site" evidence="1">
    <location>
        <position position="80"/>
    </location>
    <ligand>
        <name>substrate</name>
    </ligand>
</feature>
<feature type="binding site" evidence="1">
    <location>
        <position position="117"/>
    </location>
    <ligand>
        <name>ATP</name>
        <dbReference type="ChEBI" id="CHEBI:30616"/>
    </ligand>
</feature>
<feature type="binding site" evidence="1">
    <location>
        <position position="136"/>
    </location>
    <ligand>
        <name>substrate</name>
    </ligand>
</feature>
<feature type="binding site" evidence="1">
    <location>
        <position position="153"/>
    </location>
    <ligand>
        <name>ATP</name>
        <dbReference type="ChEBI" id="CHEBI:30616"/>
    </ligand>
</feature>
<protein>
    <recommendedName>
        <fullName evidence="1">Shikimate kinase</fullName>
        <shortName evidence="1">SK</shortName>
        <ecNumber evidence="1">2.7.1.71</ecNumber>
    </recommendedName>
</protein>
<accession>Q0S0N1</accession>
<dbReference type="EC" id="2.7.1.71" evidence="1"/>
<dbReference type="EMBL" id="CP000431">
    <property type="protein sequence ID" value="ABG98905.1"/>
    <property type="molecule type" value="Genomic_DNA"/>
</dbReference>
<dbReference type="RefSeq" id="WP_005241678.1">
    <property type="nucleotide sequence ID" value="NC_008268.1"/>
</dbReference>
<dbReference type="SMR" id="Q0S0N1"/>
<dbReference type="KEGG" id="rha:RHA1_ro07141"/>
<dbReference type="eggNOG" id="COG0703">
    <property type="taxonomic scope" value="Bacteria"/>
</dbReference>
<dbReference type="HOGENOM" id="CLU_057607_3_3_11"/>
<dbReference type="OrthoDB" id="9800332at2"/>
<dbReference type="UniPathway" id="UPA00053">
    <property type="reaction ID" value="UER00088"/>
</dbReference>
<dbReference type="Proteomes" id="UP000008710">
    <property type="component" value="Chromosome"/>
</dbReference>
<dbReference type="GO" id="GO:0005829">
    <property type="term" value="C:cytosol"/>
    <property type="evidence" value="ECO:0007669"/>
    <property type="project" value="TreeGrafter"/>
</dbReference>
<dbReference type="GO" id="GO:0005524">
    <property type="term" value="F:ATP binding"/>
    <property type="evidence" value="ECO:0007669"/>
    <property type="project" value="UniProtKB-UniRule"/>
</dbReference>
<dbReference type="GO" id="GO:0000287">
    <property type="term" value="F:magnesium ion binding"/>
    <property type="evidence" value="ECO:0007669"/>
    <property type="project" value="UniProtKB-UniRule"/>
</dbReference>
<dbReference type="GO" id="GO:0004765">
    <property type="term" value="F:shikimate kinase activity"/>
    <property type="evidence" value="ECO:0007669"/>
    <property type="project" value="UniProtKB-UniRule"/>
</dbReference>
<dbReference type="GO" id="GO:0008652">
    <property type="term" value="P:amino acid biosynthetic process"/>
    <property type="evidence" value="ECO:0007669"/>
    <property type="project" value="UniProtKB-KW"/>
</dbReference>
<dbReference type="GO" id="GO:0009073">
    <property type="term" value="P:aromatic amino acid family biosynthetic process"/>
    <property type="evidence" value="ECO:0007669"/>
    <property type="project" value="UniProtKB-KW"/>
</dbReference>
<dbReference type="GO" id="GO:0009423">
    <property type="term" value="P:chorismate biosynthetic process"/>
    <property type="evidence" value="ECO:0007669"/>
    <property type="project" value="UniProtKB-UniRule"/>
</dbReference>
<dbReference type="CDD" id="cd00464">
    <property type="entry name" value="SK"/>
    <property type="match status" value="1"/>
</dbReference>
<dbReference type="Gene3D" id="3.40.50.300">
    <property type="entry name" value="P-loop containing nucleotide triphosphate hydrolases"/>
    <property type="match status" value="1"/>
</dbReference>
<dbReference type="HAMAP" id="MF_00109">
    <property type="entry name" value="Shikimate_kinase"/>
    <property type="match status" value="1"/>
</dbReference>
<dbReference type="InterPro" id="IPR027417">
    <property type="entry name" value="P-loop_NTPase"/>
</dbReference>
<dbReference type="InterPro" id="IPR031322">
    <property type="entry name" value="Shikimate/glucono_kinase"/>
</dbReference>
<dbReference type="InterPro" id="IPR000623">
    <property type="entry name" value="Shikimate_kinase/TSH1"/>
</dbReference>
<dbReference type="InterPro" id="IPR023000">
    <property type="entry name" value="Shikimate_kinase_CS"/>
</dbReference>
<dbReference type="PANTHER" id="PTHR21087">
    <property type="entry name" value="SHIKIMATE KINASE"/>
    <property type="match status" value="1"/>
</dbReference>
<dbReference type="PANTHER" id="PTHR21087:SF16">
    <property type="entry name" value="SHIKIMATE KINASE 1, CHLOROPLASTIC"/>
    <property type="match status" value="1"/>
</dbReference>
<dbReference type="Pfam" id="PF01202">
    <property type="entry name" value="SKI"/>
    <property type="match status" value="1"/>
</dbReference>
<dbReference type="PRINTS" id="PR01100">
    <property type="entry name" value="SHIKIMTKNASE"/>
</dbReference>
<dbReference type="SUPFAM" id="SSF52540">
    <property type="entry name" value="P-loop containing nucleoside triphosphate hydrolases"/>
    <property type="match status" value="1"/>
</dbReference>
<dbReference type="PROSITE" id="PS01128">
    <property type="entry name" value="SHIKIMATE_KINASE"/>
    <property type="match status" value="1"/>
</dbReference>
<comment type="function">
    <text evidence="1">Catalyzes the specific phosphorylation of the 3-hydroxyl group of shikimic acid using ATP as a cosubstrate.</text>
</comment>
<comment type="catalytic activity">
    <reaction evidence="1">
        <text>shikimate + ATP = 3-phosphoshikimate + ADP + H(+)</text>
        <dbReference type="Rhea" id="RHEA:13121"/>
        <dbReference type="ChEBI" id="CHEBI:15378"/>
        <dbReference type="ChEBI" id="CHEBI:30616"/>
        <dbReference type="ChEBI" id="CHEBI:36208"/>
        <dbReference type="ChEBI" id="CHEBI:145989"/>
        <dbReference type="ChEBI" id="CHEBI:456216"/>
        <dbReference type="EC" id="2.7.1.71"/>
    </reaction>
</comment>
<comment type="cofactor">
    <cofactor evidence="1">
        <name>Mg(2+)</name>
        <dbReference type="ChEBI" id="CHEBI:18420"/>
    </cofactor>
    <text evidence="1">Binds 1 Mg(2+) ion per subunit.</text>
</comment>
<comment type="pathway">
    <text evidence="1">Metabolic intermediate biosynthesis; chorismate biosynthesis; chorismate from D-erythrose 4-phosphate and phosphoenolpyruvate: step 5/7.</text>
</comment>
<comment type="subunit">
    <text evidence="1">Monomer.</text>
</comment>
<comment type="subcellular location">
    <subcellularLocation>
        <location evidence="1">Cytoplasm</location>
    </subcellularLocation>
</comment>
<comment type="similarity">
    <text evidence="1">Belongs to the shikimate kinase family.</text>
</comment>
<name>AROK_RHOJR</name>
<keyword id="KW-0028">Amino-acid biosynthesis</keyword>
<keyword id="KW-0057">Aromatic amino acid biosynthesis</keyword>
<keyword id="KW-0067">ATP-binding</keyword>
<keyword id="KW-0963">Cytoplasm</keyword>
<keyword id="KW-0418">Kinase</keyword>
<keyword id="KW-0460">Magnesium</keyword>
<keyword id="KW-0479">Metal-binding</keyword>
<keyword id="KW-0547">Nucleotide-binding</keyword>
<keyword id="KW-0808">Transferase</keyword>